<sequence length="322" mass="36306">MPVPGITVETILRDHDDLQLQLVTGEVGLSNRINSAEINRPGLSLTGFFDFFANDRIQILGKGEWAYLNSLSEEKLGEITDKFFEFHLNCIIYTHGNEPQVPFVERAKEKGIPLFKTEIATHRFITLISQILDRALAPRTMRHGVLIEVFGIGTLLTGRSGVGKSETALELIERGHRLVADDMVEIRRLSESYLIGSCSDLLRHHMEIRGLGILNIKDLFGVGSVRDHKLIELIINLKEWEEQTSGDYERTGIEQSMEEILGVSVPYIEIPVKPGRNIPIIVETAAMNQRLRKMGKNSAKEFSNKLNTYIQQSSIETNPIKD</sequence>
<proteinExistence type="inferred from homology"/>
<gene>
    <name evidence="1" type="primary">hprK</name>
    <name type="ordered locus">LEPBI_I1651</name>
</gene>
<comment type="function">
    <text evidence="1">Catalyzes the ATP- as well as the pyrophosphate-dependent phosphorylation of a specific serine residue in HPr, a phosphocarrier protein of the phosphoenolpyruvate-dependent sugar phosphotransferase system (PTS). HprK/P also catalyzes the pyrophosphate-producing, inorganic phosphate-dependent dephosphorylation (phosphorolysis) of seryl-phosphorylated HPr (P-Ser-HPr).</text>
</comment>
<comment type="catalytic activity">
    <reaction evidence="1">
        <text>[HPr protein]-L-serine + ATP = [HPr protein]-O-phospho-L-serine + ADP + H(+)</text>
        <dbReference type="Rhea" id="RHEA:46600"/>
        <dbReference type="Rhea" id="RHEA-COMP:11602"/>
        <dbReference type="Rhea" id="RHEA-COMP:11603"/>
        <dbReference type="ChEBI" id="CHEBI:15378"/>
        <dbReference type="ChEBI" id="CHEBI:29999"/>
        <dbReference type="ChEBI" id="CHEBI:30616"/>
        <dbReference type="ChEBI" id="CHEBI:83421"/>
        <dbReference type="ChEBI" id="CHEBI:456216"/>
    </reaction>
</comment>
<comment type="catalytic activity">
    <reaction evidence="1">
        <text>[HPr protein]-O-phospho-L-serine + phosphate + H(+) = [HPr protein]-L-serine + diphosphate</text>
        <dbReference type="Rhea" id="RHEA:46604"/>
        <dbReference type="Rhea" id="RHEA-COMP:11602"/>
        <dbReference type="Rhea" id="RHEA-COMP:11603"/>
        <dbReference type="ChEBI" id="CHEBI:15378"/>
        <dbReference type="ChEBI" id="CHEBI:29999"/>
        <dbReference type="ChEBI" id="CHEBI:33019"/>
        <dbReference type="ChEBI" id="CHEBI:43474"/>
        <dbReference type="ChEBI" id="CHEBI:83421"/>
    </reaction>
</comment>
<comment type="cofactor">
    <cofactor evidence="1">
        <name>Mg(2+)</name>
        <dbReference type="ChEBI" id="CHEBI:18420"/>
    </cofactor>
</comment>
<comment type="subunit">
    <text evidence="1">Homohexamer.</text>
</comment>
<comment type="domain">
    <text evidence="1">The Walker A ATP-binding motif also binds Pi and PPi.</text>
</comment>
<comment type="miscellaneous">
    <text evidence="1">Both phosphorylation and phosphorolysis are carried out by the same active site and suggest a common mechanism for both reactions.</text>
</comment>
<comment type="similarity">
    <text evidence="1">Belongs to the HPrK/P family.</text>
</comment>
<dbReference type="EC" id="2.7.11.-" evidence="1"/>
<dbReference type="EC" id="2.7.4.-" evidence="1"/>
<dbReference type="EMBL" id="CP000786">
    <property type="protein sequence ID" value="ABZ97758.1"/>
    <property type="molecule type" value="Genomic_DNA"/>
</dbReference>
<dbReference type="RefSeq" id="WP_012388636.1">
    <property type="nucleotide sequence ID" value="NC_010602.1"/>
</dbReference>
<dbReference type="SMR" id="B0SR57"/>
<dbReference type="STRING" id="456481.LEPBI_I1651"/>
<dbReference type="KEGG" id="lbi:LEPBI_I1651"/>
<dbReference type="HOGENOM" id="CLU_052030_0_1_12"/>
<dbReference type="OrthoDB" id="9778803at2"/>
<dbReference type="BioCyc" id="LBIF456481:LEPBI_RS08155-MONOMER"/>
<dbReference type="Proteomes" id="UP000001847">
    <property type="component" value="Chromosome I"/>
</dbReference>
<dbReference type="GO" id="GO:0005524">
    <property type="term" value="F:ATP binding"/>
    <property type="evidence" value="ECO:0007669"/>
    <property type="project" value="UniProtKB-UniRule"/>
</dbReference>
<dbReference type="GO" id="GO:0000287">
    <property type="term" value="F:magnesium ion binding"/>
    <property type="evidence" value="ECO:0007669"/>
    <property type="project" value="UniProtKB-UniRule"/>
</dbReference>
<dbReference type="GO" id="GO:0000155">
    <property type="term" value="F:phosphorelay sensor kinase activity"/>
    <property type="evidence" value="ECO:0007669"/>
    <property type="project" value="InterPro"/>
</dbReference>
<dbReference type="GO" id="GO:0004674">
    <property type="term" value="F:protein serine/threonine kinase activity"/>
    <property type="evidence" value="ECO:0007669"/>
    <property type="project" value="UniProtKB-KW"/>
</dbReference>
<dbReference type="GO" id="GO:0004712">
    <property type="term" value="F:protein serine/threonine/tyrosine kinase activity"/>
    <property type="evidence" value="ECO:0007669"/>
    <property type="project" value="UniProtKB-UniRule"/>
</dbReference>
<dbReference type="GO" id="GO:0006109">
    <property type="term" value="P:regulation of carbohydrate metabolic process"/>
    <property type="evidence" value="ECO:0007669"/>
    <property type="project" value="UniProtKB-UniRule"/>
</dbReference>
<dbReference type="CDD" id="cd01918">
    <property type="entry name" value="HprK_C"/>
    <property type="match status" value="1"/>
</dbReference>
<dbReference type="FunFam" id="3.40.50.300:FF:000174">
    <property type="entry name" value="HPr kinase/phosphorylase"/>
    <property type="match status" value="1"/>
</dbReference>
<dbReference type="Gene3D" id="3.40.1390.20">
    <property type="entry name" value="HprK N-terminal domain-like"/>
    <property type="match status" value="1"/>
</dbReference>
<dbReference type="Gene3D" id="3.40.50.300">
    <property type="entry name" value="P-loop containing nucleotide triphosphate hydrolases"/>
    <property type="match status" value="1"/>
</dbReference>
<dbReference type="HAMAP" id="MF_01249">
    <property type="entry name" value="HPr_kinase"/>
    <property type="match status" value="1"/>
</dbReference>
<dbReference type="InterPro" id="IPR003755">
    <property type="entry name" value="HPr(Ser)_kin/Pase"/>
</dbReference>
<dbReference type="InterPro" id="IPR011104">
    <property type="entry name" value="Hpr_kin/Pase_C"/>
</dbReference>
<dbReference type="InterPro" id="IPR011126">
    <property type="entry name" value="Hpr_kin/Pase_Hpr_N"/>
</dbReference>
<dbReference type="InterPro" id="IPR027417">
    <property type="entry name" value="P-loop_NTPase"/>
</dbReference>
<dbReference type="InterPro" id="IPR028979">
    <property type="entry name" value="Ser_kin/Pase_Hpr-like_N_sf"/>
</dbReference>
<dbReference type="NCBIfam" id="TIGR00679">
    <property type="entry name" value="hpr-ser"/>
    <property type="match status" value="1"/>
</dbReference>
<dbReference type="PANTHER" id="PTHR30305:SF1">
    <property type="entry name" value="HPR KINASE_PHOSPHORYLASE"/>
    <property type="match status" value="1"/>
</dbReference>
<dbReference type="PANTHER" id="PTHR30305">
    <property type="entry name" value="PROTEIN YJDM-RELATED"/>
    <property type="match status" value="1"/>
</dbReference>
<dbReference type="Pfam" id="PF07475">
    <property type="entry name" value="Hpr_kinase_C"/>
    <property type="match status" value="1"/>
</dbReference>
<dbReference type="Pfam" id="PF02603">
    <property type="entry name" value="Hpr_kinase_N"/>
    <property type="match status" value="1"/>
</dbReference>
<dbReference type="SUPFAM" id="SSF75138">
    <property type="entry name" value="HprK N-terminal domain-like"/>
    <property type="match status" value="1"/>
</dbReference>
<dbReference type="SUPFAM" id="SSF53795">
    <property type="entry name" value="PEP carboxykinase-like"/>
    <property type="match status" value="1"/>
</dbReference>
<keyword id="KW-0067">ATP-binding</keyword>
<keyword id="KW-0418">Kinase</keyword>
<keyword id="KW-0460">Magnesium</keyword>
<keyword id="KW-0479">Metal-binding</keyword>
<keyword id="KW-0511">Multifunctional enzyme</keyword>
<keyword id="KW-0547">Nucleotide-binding</keyword>
<keyword id="KW-1185">Reference proteome</keyword>
<keyword id="KW-0723">Serine/threonine-protein kinase</keyword>
<keyword id="KW-0808">Transferase</keyword>
<accession>B0SR57</accession>
<protein>
    <recommendedName>
        <fullName evidence="1">HPr kinase/phosphorylase</fullName>
        <shortName evidence="1">HPrK/P</shortName>
        <ecNumber evidence="1">2.7.11.-</ecNumber>
        <ecNumber evidence="1">2.7.4.-</ecNumber>
    </recommendedName>
    <alternativeName>
        <fullName evidence="1">HPr(Ser) kinase/phosphorylase</fullName>
    </alternativeName>
</protein>
<organism>
    <name type="scientific">Leptospira biflexa serovar Patoc (strain Patoc 1 / ATCC 23582 / Paris)</name>
    <dbReference type="NCBI Taxonomy" id="456481"/>
    <lineage>
        <taxon>Bacteria</taxon>
        <taxon>Pseudomonadati</taxon>
        <taxon>Spirochaetota</taxon>
        <taxon>Spirochaetia</taxon>
        <taxon>Leptospirales</taxon>
        <taxon>Leptospiraceae</taxon>
        <taxon>Leptospira</taxon>
    </lineage>
</organism>
<evidence type="ECO:0000255" key="1">
    <source>
        <dbReference type="HAMAP-Rule" id="MF_01249"/>
    </source>
</evidence>
<reference key="1">
    <citation type="journal article" date="2008" name="PLoS ONE">
        <title>Genome sequence of the saprophyte Leptospira biflexa provides insights into the evolution of Leptospira and the pathogenesis of leptospirosis.</title>
        <authorList>
            <person name="Picardeau M."/>
            <person name="Bulach D.M."/>
            <person name="Bouchier C."/>
            <person name="Zuerner R.L."/>
            <person name="Zidane N."/>
            <person name="Wilson P.J."/>
            <person name="Creno S."/>
            <person name="Kuczek E.S."/>
            <person name="Bommezzadri S."/>
            <person name="Davis J.C."/>
            <person name="McGrath A."/>
            <person name="Johnson M.J."/>
            <person name="Boursaux-Eude C."/>
            <person name="Seemann T."/>
            <person name="Rouy Z."/>
            <person name="Coppel R.L."/>
            <person name="Rood J.I."/>
            <person name="Lajus A."/>
            <person name="Davies J.K."/>
            <person name="Medigue C."/>
            <person name="Adler B."/>
        </authorList>
    </citation>
    <scope>NUCLEOTIDE SEQUENCE [LARGE SCALE GENOMIC DNA]</scope>
    <source>
        <strain>Patoc 1 / ATCC 23582 / Paris</strain>
    </source>
</reference>
<feature type="chain" id="PRO_1000139904" description="HPr kinase/phosphorylase">
    <location>
        <begin position="1"/>
        <end position="322"/>
    </location>
</feature>
<feature type="region of interest" description="Important for the catalytic mechanism of both phosphorylation and dephosphorylation" evidence="1">
    <location>
        <begin position="206"/>
        <end position="215"/>
    </location>
</feature>
<feature type="region of interest" description="Important for the catalytic mechanism of dephosphorylation" evidence="1">
    <location>
        <begin position="271"/>
        <end position="276"/>
    </location>
</feature>
<feature type="active site" evidence="1">
    <location>
        <position position="143"/>
    </location>
</feature>
<feature type="active site" evidence="1">
    <location>
        <position position="164"/>
    </location>
</feature>
<feature type="active site" description="Proton acceptor; for phosphorylation activity. Proton donor; for dephosphorylation activity" evidence="1">
    <location>
        <position position="182"/>
    </location>
</feature>
<feature type="active site" evidence="1">
    <location>
        <position position="250"/>
    </location>
</feature>
<feature type="binding site" evidence="1">
    <location>
        <begin position="158"/>
        <end position="165"/>
    </location>
    <ligand>
        <name>ATP</name>
        <dbReference type="ChEBI" id="CHEBI:30616"/>
    </ligand>
</feature>
<feature type="binding site" evidence="1">
    <location>
        <position position="165"/>
    </location>
    <ligand>
        <name>Mg(2+)</name>
        <dbReference type="ChEBI" id="CHEBI:18420"/>
    </ligand>
</feature>
<feature type="binding site" evidence="1">
    <location>
        <position position="207"/>
    </location>
    <ligand>
        <name>Mg(2+)</name>
        <dbReference type="ChEBI" id="CHEBI:18420"/>
    </ligand>
</feature>
<name>HPRK_LEPBP</name>